<keyword id="KW-0025">Alternative splicing</keyword>
<keyword id="KW-0238">DNA-binding</keyword>
<keyword id="KW-1017">Isopeptide bond</keyword>
<keyword id="KW-0517">Myogenesis</keyword>
<keyword id="KW-0539">Nucleus</keyword>
<keyword id="KW-0597">Phosphoprotein</keyword>
<keyword id="KW-1185">Reference proteome</keyword>
<keyword id="KW-0804">Transcription</keyword>
<keyword id="KW-0805">Transcription regulation</keyword>
<keyword id="KW-0832">Ubl conjugation</keyword>
<protein>
    <recommendedName>
        <fullName>PAX3- and PAX7-binding protein 1</fullName>
        <shortName>PAX3/7BP</shortName>
    </recommendedName>
    <alternativeName>
        <fullName>GC-rich sequence DNA-binding factor 1</fullName>
    </alternativeName>
</protein>
<gene>
    <name type="primary">Paxbp1</name>
    <name type="synonym">Gcfc</name>
    <name type="synonym">Gcfc1</name>
</gene>
<dbReference type="EMBL" id="AC141885">
    <property type="status" value="NOT_ANNOTATED_CDS"/>
    <property type="molecule type" value="Genomic_DNA"/>
</dbReference>
<dbReference type="EMBL" id="AY033907">
    <property type="protein sequence ID" value="AAK68725.1"/>
    <property type="molecule type" value="mRNA"/>
</dbReference>
<dbReference type="EMBL" id="AY033908">
    <property type="protein sequence ID" value="AAK68726.1"/>
    <property type="molecule type" value="mRNA"/>
</dbReference>
<dbReference type="EMBL" id="AK007365">
    <property type="protein sequence ID" value="BAB24988.2"/>
    <property type="status" value="ALT_SEQ"/>
    <property type="molecule type" value="mRNA"/>
</dbReference>
<dbReference type="EMBL" id="AK011477">
    <property type="protein sequence ID" value="BAB27645.2"/>
    <property type="status" value="ALT_SEQ"/>
    <property type="molecule type" value="mRNA"/>
</dbReference>
<dbReference type="EMBL" id="BC014838">
    <property type="protein sequence ID" value="AAH14838.2"/>
    <property type="status" value="ALT_SEQ"/>
    <property type="molecule type" value="mRNA"/>
</dbReference>
<dbReference type="EMBL" id="BC027145">
    <property type="protein sequence ID" value="AAH27145.1"/>
    <property type="status" value="ALT_SEQ"/>
    <property type="molecule type" value="mRNA"/>
</dbReference>
<dbReference type="CCDS" id="CCDS49908.1">
    <molecule id="P58501-1"/>
</dbReference>
<dbReference type="RefSeq" id="NP_080386.3">
    <molecule id="P58501-1"/>
    <property type="nucleotide sequence ID" value="NM_026110.2"/>
</dbReference>
<dbReference type="SMR" id="P58501"/>
<dbReference type="BioGRID" id="212138">
    <property type="interactions" value="20"/>
</dbReference>
<dbReference type="FunCoup" id="P58501">
    <property type="interactions" value="4226"/>
</dbReference>
<dbReference type="STRING" id="10090.ENSMUSP00000113835"/>
<dbReference type="iPTMnet" id="P58501"/>
<dbReference type="PhosphoSitePlus" id="P58501"/>
<dbReference type="jPOST" id="P58501"/>
<dbReference type="PaxDb" id="10090-ENSMUSP00000113835"/>
<dbReference type="PeptideAtlas" id="P58501"/>
<dbReference type="ProteomicsDB" id="287786">
    <molecule id="P58501-1"/>
</dbReference>
<dbReference type="ProteomicsDB" id="287787">
    <molecule id="P58501-2"/>
</dbReference>
<dbReference type="Pumba" id="P58501"/>
<dbReference type="Antibodypedia" id="22645">
    <property type="antibodies" value="134 antibodies from 23 providers"/>
</dbReference>
<dbReference type="DNASU" id="67367"/>
<dbReference type="Ensembl" id="ENSMUST00000118522.8">
    <molecule id="P58501-1"/>
    <property type="protein sequence ID" value="ENSMUSP00000113835.2"/>
    <property type="gene ID" value="ENSMUSG00000022974.13"/>
</dbReference>
<dbReference type="GeneID" id="67367"/>
<dbReference type="KEGG" id="mmu:67367"/>
<dbReference type="UCSC" id="uc012aih.1">
    <molecule id="P58501-1"/>
    <property type="organism name" value="mouse"/>
</dbReference>
<dbReference type="AGR" id="MGI:1914617"/>
<dbReference type="CTD" id="94104"/>
<dbReference type="MGI" id="MGI:1914617">
    <property type="gene designation" value="Paxbp1"/>
</dbReference>
<dbReference type="VEuPathDB" id="HostDB:ENSMUSG00000022974"/>
<dbReference type="eggNOG" id="KOG2136">
    <property type="taxonomic scope" value="Eukaryota"/>
</dbReference>
<dbReference type="GeneTree" id="ENSGT00390000000455"/>
<dbReference type="HOGENOM" id="CLU_010846_3_0_1"/>
<dbReference type="InParanoid" id="P58501"/>
<dbReference type="OMA" id="MKNICLW"/>
<dbReference type="OrthoDB" id="429427at2759"/>
<dbReference type="PhylomeDB" id="P58501"/>
<dbReference type="TreeFam" id="TF315109"/>
<dbReference type="BioGRID-ORCS" id="67367">
    <property type="hits" value="7 hits in 78 CRISPR screens"/>
</dbReference>
<dbReference type="ChiTaRS" id="Paxbp1">
    <property type="organism name" value="mouse"/>
</dbReference>
<dbReference type="PRO" id="PR:P58501"/>
<dbReference type="Proteomes" id="UP000000589">
    <property type="component" value="Chromosome 16"/>
</dbReference>
<dbReference type="RNAct" id="P58501">
    <property type="molecule type" value="protein"/>
</dbReference>
<dbReference type="Bgee" id="ENSMUSG00000022974">
    <property type="expression patterns" value="Expressed in cerebellar cortex and 271 other cell types or tissues"/>
</dbReference>
<dbReference type="ExpressionAtlas" id="P58501">
    <property type="expression patterns" value="baseline and differential"/>
</dbReference>
<dbReference type="GO" id="GO:0005634">
    <property type="term" value="C:nucleus"/>
    <property type="evidence" value="ECO:0000314"/>
    <property type="project" value="MGI"/>
</dbReference>
<dbReference type="GO" id="GO:0003677">
    <property type="term" value="F:DNA binding"/>
    <property type="evidence" value="ECO:0007669"/>
    <property type="project" value="UniProtKB-KW"/>
</dbReference>
<dbReference type="GO" id="GO:1990226">
    <property type="term" value="F:histone methyltransferase binding"/>
    <property type="evidence" value="ECO:0000353"/>
    <property type="project" value="MGI"/>
</dbReference>
<dbReference type="GO" id="GO:0000398">
    <property type="term" value="P:mRNA splicing, via spliceosome"/>
    <property type="evidence" value="ECO:0007669"/>
    <property type="project" value="InterPro"/>
</dbReference>
<dbReference type="GO" id="GO:0007517">
    <property type="term" value="P:muscle organ development"/>
    <property type="evidence" value="ECO:0007669"/>
    <property type="project" value="UniProtKB-KW"/>
</dbReference>
<dbReference type="GO" id="GO:2000288">
    <property type="term" value="P:positive regulation of myoblast proliferation"/>
    <property type="evidence" value="ECO:0000315"/>
    <property type="project" value="MGI"/>
</dbReference>
<dbReference type="GO" id="GO:0045944">
    <property type="term" value="P:positive regulation of transcription by RNA polymerase II"/>
    <property type="evidence" value="ECO:0000315"/>
    <property type="project" value="MGI"/>
</dbReference>
<dbReference type="GO" id="GO:0014842">
    <property type="term" value="P:regulation of skeletal muscle satellite cell proliferation"/>
    <property type="evidence" value="ECO:0000315"/>
    <property type="project" value="MGI"/>
</dbReference>
<dbReference type="GO" id="GO:0006366">
    <property type="term" value="P:transcription by RNA polymerase II"/>
    <property type="evidence" value="ECO:0000315"/>
    <property type="project" value="MGI"/>
</dbReference>
<dbReference type="InterPro" id="IPR012890">
    <property type="entry name" value="GCFC2-like"/>
</dbReference>
<dbReference type="InterPro" id="IPR022783">
    <property type="entry name" value="GCFC_dom"/>
</dbReference>
<dbReference type="PANTHER" id="PTHR12214">
    <property type="entry name" value="GC-RICH SEQUENCE DNA-BINDING FACTOR"/>
    <property type="match status" value="1"/>
</dbReference>
<dbReference type="PANTHER" id="PTHR12214:SF2">
    <property type="entry name" value="PAX3- AND PAX7-BINDING PROTEIN 1"/>
    <property type="match status" value="1"/>
</dbReference>
<dbReference type="Pfam" id="PF07842">
    <property type="entry name" value="GCFC"/>
    <property type="match status" value="1"/>
</dbReference>
<feature type="chain" id="PRO_0000087440" description="PAX3- and PAX7-binding protein 1">
    <location>
        <begin position="1"/>
        <end position="919"/>
    </location>
</feature>
<feature type="region of interest" description="Disordered" evidence="2">
    <location>
        <begin position="1"/>
        <end position="120"/>
    </location>
</feature>
<feature type="region of interest" description="Disordered" evidence="2">
    <location>
        <begin position="151"/>
        <end position="206"/>
    </location>
</feature>
<feature type="region of interest" description="Disordered" evidence="2">
    <location>
        <begin position="237"/>
        <end position="277"/>
    </location>
</feature>
<feature type="region of interest" description="Necessary and sufficient for interaction with PAX7" evidence="3">
    <location>
        <begin position="380"/>
        <end position="560"/>
    </location>
</feature>
<feature type="region of interest" description="Disordered" evidence="2">
    <location>
        <begin position="533"/>
        <end position="566"/>
    </location>
</feature>
<feature type="compositionally biased region" description="Basic residues" evidence="2">
    <location>
        <begin position="1"/>
        <end position="11"/>
    </location>
</feature>
<feature type="compositionally biased region" description="Acidic residues" evidence="2">
    <location>
        <begin position="16"/>
        <end position="28"/>
    </location>
</feature>
<feature type="compositionally biased region" description="Low complexity" evidence="2">
    <location>
        <begin position="49"/>
        <end position="59"/>
    </location>
</feature>
<feature type="compositionally biased region" description="Gly residues" evidence="2">
    <location>
        <begin position="75"/>
        <end position="87"/>
    </location>
</feature>
<feature type="compositionally biased region" description="Basic and acidic residues" evidence="2">
    <location>
        <begin position="163"/>
        <end position="174"/>
    </location>
</feature>
<feature type="compositionally biased region" description="Acidic residues" evidence="2">
    <location>
        <begin position="185"/>
        <end position="195"/>
    </location>
</feature>
<feature type="compositionally biased region" description="Basic and acidic residues" evidence="2">
    <location>
        <begin position="237"/>
        <end position="258"/>
    </location>
</feature>
<feature type="compositionally biased region" description="Acidic residues" evidence="2">
    <location>
        <begin position="259"/>
        <end position="270"/>
    </location>
</feature>
<feature type="modified residue" description="Phosphoserine" evidence="1">
    <location>
        <position position="16"/>
    </location>
</feature>
<feature type="modified residue" description="Phosphoserine" evidence="1">
    <location>
        <position position="160"/>
    </location>
</feature>
<feature type="modified residue" description="Phosphoserine" evidence="1">
    <location>
        <position position="193"/>
    </location>
</feature>
<feature type="modified residue" description="Phosphoserine" evidence="1">
    <location>
        <position position="264"/>
    </location>
</feature>
<feature type="modified residue" description="Phosphoserine" evidence="8">
    <location>
        <position position="297"/>
    </location>
</feature>
<feature type="modified residue" description="Phosphoserine" evidence="8">
    <location>
        <position position="559"/>
    </location>
</feature>
<feature type="modified residue" description="Phosphoserine" evidence="8">
    <location>
        <position position="560"/>
    </location>
</feature>
<feature type="modified residue" description="Phosphothreonine" evidence="8">
    <location>
        <position position="565"/>
    </location>
</feature>
<feature type="cross-link" description="Glycyl lysine isopeptide (Lys-Gly) (interchain with G-Cter in SUMO1); alternate" evidence="1">
    <location>
        <position position="151"/>
    </location>
</feature>
<feature type="cross-link" description="Glycyl lysine isopeptide (Lys-Gly) (interchain with G-Cter in SUMO2); alternate" evidence="1">
    <location>
        <position position="151"/>
    </location>
</feature>
<feature type="splice variant" id="VSP_004268" description="In isoform 2." evidence="4 5 6">
    <original>NKALMAPNL</original>
    <variation>SQSILKIKL</variation>
    <location>
        <begin position="505"/>
        <end position="513"/>
    </location>
</feature>
<feature type="splice variant" id="VSP_004269" description="In isoform 2." evidence="4 5 6">
    <location>
        <begin position="514"/>
        <end position="919"/>
    </location>
</feature>
<feature type="sequence conflict" description="In Ref. 2; AAK68725/AAK68726." evidence="7" ref="2">
    <original>H</original>
    <variation>N</variation>
    <location>
        <position position="70"/>
    </location>
</feature>
<feature type="sequence conflict" description="In Ref. 2; AAK68725/AAK68726." evidence="7" ref="2">
    <original>S</original>
    <variation>P</variation>
    <location>
        <position position="82"/>
    </location>
</feature>
<feature type="sequence conflict" description="In Ref. 2; AAK68725." evidence="7" ref="2">
    <original>NK</original>
    <variation>SQ</variation>
    <location>
        <begin position="505"/>
        <end position="506"/>
    </location>
</feature>
<feature type="sequence conflict" description="In Ref. 3; BAB24988." evidence="7" ref="3">
    <original>K</original>
    <variation>E</variation>
    <location sequence="P58501-2">
        <position position="510"/>
    </location>
</feature>
<organism>
    <name type="scientific">Mus musculus</name>
    <name type="common">Mouse</name>
    <dbReference type="NCBI Taxonomy" id="10090"/>
    <lineage>
        <taxon>Eukaryota</taxon>
        <taxon>Metazoa</taxon>
        <taxon>Chordata</taxon>
        <taxon>Craniata</taxon>
        <taxon>Vertebrata</taxon>
        <taxon>Euteleostomi</taxon>
        <taxon>Mammalia</taxon>
        <taxon>Eutheria</taxon>
        <taxon>Euarchontoglires</taxon>
        <taxon>Glires</taxon>
        <taxon>Rodentia</taxon>
        <taxon>Myomorpha</taxon>
        <taxon>Muroidea</taxon>
        <taxon>Muridae</taxon>
        <taxon>Murinae</taxon>
        <taxon>Mus</taxon>
        <taxon>Mus</taxon>
    </lineage>
</organism>
<sequence>MFRKARRVNVRKRNDSEEEERERDEEQEPPPLLPPPASGEEPGPGGGDRAPAGESLLGPGPLPPPPSAHHPGLGAEAGGGISGGAEPGNGLKPRKRPRENKEVPRASLLSFQDEEEENEEVFKVKKSSYSKKIVKLLKKEYKEDLEKSKIKTELNTAADSDQPLDKTCHAKDTNPEDGVVISEHGEDEMDMESEKEEEKPKAGGAFSNALSSLNVLRPGEIPDAAFIHAARKKRQLARELGDFTPHDSEPGKGRLVREDENDASDDEDDDEKRRIVFSVKEKSQRQKIAEEIGIEGSDDDALVTGEQDEELSRWEQEQIRKGINIPQVQASQPSEVNVYYQNTYQTMPYGASYGIPYSYTAYGSSDAKSQKTDNTVPFKTPSNEMAPVTIDLVKRQLKDRLDSMKELHKTNQQQHEKHLQSRVDSTRAIERLEGSSGGIGERYKFLQEMRGYVQDLLECFSEKVPLINELESAIHQLYKQRASRLVQRRQDDIKDESSEFSSHSNKALMAPNLDSFGRDRALYQEHAKRRIAEREARRTRRRQAREQTGQMADHLEGLSSDDEETSTDITNFNLEKDRILKESSKVFEDVLESFYSIDCIKAQFEAWRSKYYMSYKDAYIGLCLPKLFNPLIRLQLLTWTPLEAKCRDFETMLWFESLLFYGCEDREQEKDEADVALLPTIVEKVILPKLTVIAETMWDPFSTTQTSRMVGITMKLINGYPSVVNADNKNTQVYLKALLLRMRRTLDDDVFMPLYPKNVLENKNSGPYLFFQRQFWSSVKLLGNFLQWYGIFSNKTLQELSIDGLLNRYILMAFQNSEYGDDSIRKAQNVINCFPKQWFVNLKGERTISQLENFCRYLVHLADTIYRNSIGCSDVEKRNARENIKQIVKLLASVRALDHAISVASDHNVKEVKSLIEGK</sequence>
<comment type="function">
    <text evidence="3">Adapter protein linking the transcription factors PAX3 and PAX7 to the histone methylation machinery and involved in myogenesis. Associates with a histone methyltransferase complex that specifically mediates dimethylation and trimethylation of 'Lys-4' of histone H3. Mediates the recruitment of that complex to the transcription factors PAX3 and PAX7 on chromatin to regulate the expression of genes involved in muscle progenitor cells proliferation including ID3 and CDC20.</text>
</comment>
<comment type="subunit">
    <text evidence="3">Interacts with PAX3 and PAX7. Interacts with WDR5; associates with a histone methyltransferase (HMT) complex composed at least of RBBP5, ASH2L, SET1, SET2 and KMT2A/MLL1, KMT2D/MLL2, KMT2C/MLL3 and KMT2B/MLL4 through direct interaction with WDR5.</text>
</comment>
<comment type="subcellular location">
    <subcellularLocation>
        <location evidence="3">Nucleus</location>
    </subcellularLocation>
</comment>
<comment type="alternative products">
    <event type="alternative splicing"/>
    <isoform>
        <id>P58501-1</id>
        <name>1</name>
        <name>A</name>
        <sequence type="displayed"/>
    </isoform>
    <isoform>
        <id>P58501-2</id>
        <name>2</name>
        <name>D</name>
        <sequence type="described" ref="VSP_004268 VSP_004269"/>
    </isoform>
</comment>
<comment type="tissue specificity">
    <text evidence="3">Ubiquitously expressed in all tissues tested including skeletal muscle. Expressed in primary myoblasts.</text>
</comment>
<comment type="miscellaneous">
    <molecule>Isoform 2</molecule>
    <text evidence="7">May be produced at very low levels due to a premature stop codon in the mRNA, leading to nonsense-mediated mRNA decay.</text>
</comment>
<comment type="similarity">
    <text evidence="7">Belongs to the GCF family.</text>
</comment>
<comment type="sequence caution" evidence="7">
    <conflict type="erroneous translation">
        <sequence resource="EMBL-CDS" id="AAH14838"/>
    </conflict>
    <text>Wrong choice of frame.</text>
</comment>
<comment type="sequence caution" evidence="7">
    <conflict type="erroneous initiation">
        <sequence resource="EMBL-CDS" id="AAH27145"/>
    </conflict>
    <text>Truncated N-terminus.</text>
</comment>
<comment type="sequence caution" evidence="7">
    <conflict type="erroneous translation">
        <sequence resource="EMBL-CDS" id="AAH27145"/>
    </conflict>
    <text>Wrong choice of frame.</text>
</comment>
<comment type="sequence caution" evidence="7">
    <conflict type="erroneous translation">
        <sequence resource="EMBL-CDS" id="BAB24988"/>
    </conflict>
    <text>Wrong choice of frame.</text>
</comment>
<comment type="sequence caution" evidence="7">
    <conflict type="erroneous translation">
        <sequence resource="EMBL-CDS" id="BAB27645"/>
    </conflict>
    <text>Wrong choice of frame.</text>
</comment>
<evidence type="ECO:0000250" key="1">
    <source>
        <dbReference type="UniProtKB" id="Q9Y5B6"/>
    </source>
</evidence>
<evidence type="ECO:0000256" key="2">
    <source>
        <dbReference type="SAM" id="MobiDB-lite"/>
    </source>
</evidence>
<evidence type="ECO:0000269" key="3">
    <source>
    </source>
</evidence>
<evidence type="ECO:0000303" key="4">
    <source>
    </source>
</evidence>
<evidence type="ECO:0000303" key="5">
    <source>
    </source>
</evidence>
<evidence type="ECO:0000303" key="6">
    <source>
    </source>
</evidence>
<evidence type="ECO:0000305" key="7"/>
<evidence type="ECO:0007744" key="8">
    <source>
    </source>
</evidence>
<accession>P58501</accession>
<accession>E9QNN9</accession>
<accession>Q78XY2</accession>
<accession>Q8R2W3</accession>
<accession>Q9CRB7</accession>
<reference key="1">
    <citation type="journal article" date="2009" name="PLoS Biol.">
        <title>Lineage-specific biology revealed by a finished genome assembly of the mouse.</title>
        <authorList>
            <person name="Church D.M."/>
            <person name="Goodstadt L."/>
            <person name="Hillier L.W."/>
            <person name="Zody M.C."/>
            <person name="Goldstein S."/>
            <person name="She X."/>
            <person name="Bult C.J."/>
            <person name="Agarwala R."/>
            <person name="Cherry J.L."/>
            <person name="DiCuccio M."/>
            <person name="Hlavina W."/>
            <person name="Kapustin Y."/>
            <person name="Meric P."/>
            <person name="Maglott D."/>
            <person name="Birtle Z."/>
            <person name="Marques A.C."/>
            <person name="Graves T."/>
            <person name="Zhou S."/>
            <person name="Teague B."/>
            <person name="Potamousis K."/>
            <person name="Churas C."/>
            <person name="Place M."/>
            <person name="Herschleb J."/>
            <person name="Runnheim R."/>
            <person name="Forrest D."/>
            <person name="Amos-Landgraf J."/>
            <person name="Schwartz D.C."/>
            <person name="Cheng Z."/>
            <person name="Lindblad-Toh K."/>
            <person name="Eichler E.E."/>
            <person name="Ponting C.P."/>
        </authorList>
    </citation>
    <scope>NUCLEOTIDE SEQUENCE [LARGE SCALE GENOMIC DNA]</scope>
    <source>
        <strain>C57BL/6J</strain>
    </source>
</reference>
<reference key="2">
    <citation type="journal article" date="2001" name="Genomics">
        <title>From PREDs and open reading frames to cDNA isolation: revisiting the human chromosome 21 transcription map.</title>
        <authorList>
            <person name="Reymond A."/>
            <person name="Friedli M."/>
            <person name="Neergaard Henrichsen C."/>
            <person name="Chapot F."/>
            <person name="Deutsch S."/>
            <person name="Ucla C."/>
            <person name="Rossier C."/>
            <person name="Lyle R."/>
            <person name="Guipponi M."/>
            <person name="Antonarakis S.E."/>
        </authorList>
    </citation>
    <scope>NUCLEOTIDE SEQUENCE [MRNA] OF 65-919 (ISOFORMS 1 AND 2)</scope>
</reference>
<reference key="3">
    <citation type="journal article" date="2005" name="Science">
        <title>The transcriptional landscape of the mammalian genome.</title>
        <authorList>
            <person name="Carninci P."/>
            <person name="Kasukawa T."/>
            <person name="Katayama S."/>
            <person name="Gough J."/>
            <person name="Frith M.C."/>
            <person name="Maeda N."/>
            <person name="Oyama R."/>
            <person name="Ravasi T."/>
            <person name="Lenhard B."/>
            <person name="Wells C."/>
            <person name="Kodzius R."/>
            <person name="Shimokawa K."/>
            <person name="Bajic V.B."/>
            <person name="Brenner S.E."/>
            <person name="Batalov S."/>
            <person name="Forrest A.R."/>
            <person name="Zavolan M."/>
            <person name="Davis M.J."/>
            <person name="Wilming L.G."/>
            <person name="Aidinis V."/>
            <person name="Allen J.E."/>
            <person name="Ambesi-Impiombato A."/>
            <person name="Apweiler R."/>
            <person name="Aturaliya R.N."/>
            <person name="Bailey T.L."/>
            <person name="Bansal M."/>
            <person name="Baxter L."/>
            <person name="Beisel K.W."/>
            <person name="Bersano T."/>
            <person name="Bono H."/>
            <person name="Chalk A.M."/>
            <person name="Chiu K.P."/>
            <person name="Choudhary V."/>
            <person name="Christoffels A."/>
            <person name="Clutterbuck D.R."/>
            <person name="Crowe M.L."/>
            <person name="Dalla E."/>
            <person name="Dalrymple B.P."/>
            <person name="de Bono B."/>
            <person name="Della Gatta G."/>
            <person name="di Bernardo D."/>
            <person name="Down T."/>
            <person name="Engstrom P."/>
            <person name="Fagiolini M."/>
            <person name="Faulkner G."/>
            <person name="Fletcher C.F."/>
            <person name="Fukushima T."/>
            <person name="Furuno M."/>
            <person name="Futaki S."/>
            <person name="Gariboldi M."/>
            <person name="Georgii-Hemming P."/>
            <person name="Gingeras T.R."/>
            <person name="Gojobori T."/>
            <person name="Green R.E."/>
            <person name="Gustincich S."/>
            <person name="Harbers M."/>
            <person name="Hayashi Y."/>
            <person name="Hensch T.K."/>
            <person name="Hirokawa N."/>
            <person name="Hill D."/>
            <person name="Huminiecki L."/>
            <person name="Iacono M."/>
            <person name="Ikeo K."/>
            <person name="Iwama A."/>
            <person name="Ishikawa T."/>
            <person name="Jakt M."/>
            <person name="Kanapin A."/>
            <person name="Katoh M."/>
            <person name="Kawasawa Y."/>
            <person name="Kelso J."/>
            <person name="Kitamura H."/>
            <person name="Kitano H."/>
            <person name="Kollias G."/>
            <person name="Krishnan S.P."/>
            <person name="Kruger A."/>
            <person name="Kummerfeld S.K."/>
            <person name="Kurochkin I.V."/>
            <person name="Lareau L.F."/>
            <person name="Lazarevic D."/>
            <person name="Lipovich L."/>
            <person name="Liu J."/>
            <person name="Liuni S."/>
            <person name="McWilliam S."/>
            <person name="Madan Babu M."/>
            <person name="Madera M."/>
            <person name="Marchionni L."/>
            <person name="Matsuda H."/>
            <person name="Matsuzawa S."/>
            <person name="Miki H."/>
            <person name="Mignone F."/>
            <person name="Miyake S."/>
            <person name="Morris K."/>
            <person name="Mottagui-Tabar S."/>
            <person name="Mulder N."/>
            <person name="Nakano N."/>
            <person name="Nakauchi H."/>
            <person name="Ng P."/>
            <person name="Nilsson R."/>
            <person name="Nishiguchi S."/>
            <person name="Nishikawa S."/>
            <person name="Nori F."/>
            <person name="Ohara O."/>
            <person name="Okazaki Y."/>
            <person name="Orlando V."/>
            <person name="Pang K.C."/>
            <person name="Pavan W.J."/>
            <person name="Pavesi G."/>
            <person name="Pesole G."/>
            <person name="Petrovsky N."/>
            <person name="Piazza S."/>
            <person name="Reed J."/>
            <person name="Reid J.F."/>
            <person name="Ring B.Z."/>
            <person name="Ringwald M."/>
            <person name="Rost B."/>
            <person name="Ruan Y."/>
            <person name="Salzberg S.L."/>
            <person name="Sandelin A."/>
            <person name="Schneider C."/>
            <person name="Schoenbach C."/>
            <person name="Sekiguchi K."/>
            <person name="Semple C.A."/>
            <person name="Seno S."/>
            <person name="Sessa L."/>
            <person name="Sheng Y."/>
            <person name="Shibata Y."/>
            <person name="Shimada H."/>
            <person name="Shimada K."/>
            <person name="Silva D."/>
            <person name="Sinclair B."/>
            <person name="Sperling S."/>
            <person name="Stupka E."/>
            <person name="Sugiura K."/>
            <person name="Sultana R."/>
            <person name="Takenaka Y."/>
            <person name="Taki K."/>
            <person name="Tammoja K."/>
            <person name="Tan S.L."/>
            <person name="Tang S."/>
            <person name="Taylor M.S."/>
            <person name="Tegner J."/>
            <person name="Teichmann S.A."/>
            <person name="Ueda H.R."/>
            <person name="van Nimwegen E."/>
            <person name="Verardo R."/>
            <person name="Wei C.L."/>
            <person name="Yagi K."/>
            <person name="Yamanishi H."/>
            <person name="Zabarovsky E."/>
            <person name="Zhu S."/>
            <person name="Zimmer A."/>
            <person name="Hide W."/>
            <person name="Bult C."/>
            <person name="Grimmond S.M."/>
            <person name="Teasdale R.D."/>
            <person name="Liu E.T."/>
            <person name="Brusic V."/>
            <person name="Quackenbush J."/>
            <person name="Wahlestedt C."/>
            <person name="Mattick J.S."/>
            <person name="Hume D.A."/>
            <person name="Kai C."/>
            <person name="Sasaki D."/>
            <person name="Tomaru Y."/>
            <person name="Fukuda S."/>
            <person name="Kanamori-Katayama M."/>
            <person name="Suzuki M."/>
            <person name="Aoki J."/>
            <person name="Arakawa T."/>
            <person name="Iida J."/>
            <person name="Imamura K."/>
            <person name="Itoh M."/>
            <person name="Kato T."/>
            <person name="Kawaji H."/>
            <person name="Kawagashira N."/>
            <person name="Kawashima T."/>
            <person name="Kojima M."/>
            <person name="Kondo S."/>
            <person name="Konno H."/>
            <person name="Nakano K."/>
            <person name="Ninomiya N."/>
            <person name="Nishio T."/>
            <person name="Okada M."/>
            <person name="Plessy C."/>
            <person name="Shibata K."/>
            <person name="Shiraki T."/>
            <person name="Suzuki S."/>
            <person name="Tagami M."/>
            <person name="Waki K."/>
            <person name="Watahiki A."/>
            <person name="Okamura-Oho Y."/>
            <person name="Suzuki H."/>
            <person name="Kawai J."/>
            <person name="Hayashizaki Y."/>
        </authorList>
    </citation>
    <scope>NUCLEOTIDE SEQUENCE [LARGE SCALE MRNA] OF 430-919 (ISOFORM 2)</scope>
    <source>
        <strain>C57BL/6J</strain>
        <tissue>Embryo</tissue>
        <tissue>Pancreas</tissue>
    </source>
</reference>
<reference key="4">
    <citation type="journal article" date="2004" name="Genome Res.">
        <title>The status, quality, and expansion of the NIH full-length cDNA project: the Mammalian Gene Collection (MGC).</title>
        <authorList>
            <consortium name="The MGC Project Team"/>
        </authorList>
    </citation>
    <scope>NUCLEOTIDE SEQUENCE [LARGE SCALE MRNA] OF 504-919 (ISOFORM 2)</scope>
    <source>
        <strain>Czech II</strain>
        <strain>FVB/N</strain>
        <tissue>Mammary gland</tissue>
    </source>
</reference>
<reference key="5">
    <citation type="journal article" date="2010" name="Cell">
        <title>A tissue-specific atlas of mouse protein phosphorylation and expression.</title>
        <authorList>
            <person name="Huttlin E.L."/>
            <person name="Jedrychowski M.P."/>
            <person name="Elias J.E."/>
            <person name="Goswami T."/>
            <person name="Rad R."/>
            <person name="Beausoleil S.A."/>
            <person name="Villen J."/>
            <person name="Haas W."/>
            <person name="Sowa M.E."/>
            <person name="Gygi S.P."/>
        </authorList>
    </citation>
    <scope>PHOSPHORYLATION [LARGE SCALE ANALYSIS] AT SER-297; SER-559; SER-560 AND THR-565</scope>
    <scope>IDENTIFICATION BY MASS SPECTROMETRY [LARGE SCALE ANALYSIS]</scope>
    <source>
        <tissue>Brain</tissue>
        <tissue>Brown adipose tissue</tissue>
        <tissue>Kidney</tissue>
        <tissue>Liver</tissue>
        <tissue>Lung</tissue>
        <tissue>Spleen</tissue>
        <tissue>Testis</tissue>
    </source>
</reference>
<reference key="6">
    <citation type="journal article" date="2012" name="Cell Stem Cell">
        <title>Pax3/7BP is a Pax7- and Pax3-binding protein that regulates the proliferation of muscle precursor cells by an epigenetic mechanism.</title>
        <authorList>
            <person name="Diao Y."/>
            <person name="Guo X."/>
            <person name="Li Y."/>
            <person name="Sun K."/>
            <person name="Lu L."/>
            <person name="Jiang L."/>
            <person name="Fu X."/>
            <person name="Zhu H."/>
            <person name="Sun H."/>
            <person name="Wang H."/>
            <person name="Wu Z."/>
        </authorList>
    </citation>
    <scope>FUNCTION</scope>
    <scope>INTERACTION WITH PAX3; PAX7 AND WDR5</scope>
    <scope>SUBCELLULAR LOCATION</scope>
    <scope>TISSUE SPECIFICITY</scope>
</reference>
<proteinExistence type="evidence at protein level"/>
<name>PAXB1_MOUSE</name>